<organism>
    <name type="scientific">Rotavirus A (isolate RVA/Monkey/United States/TUCH/2003/G3P[24])</name>
    <name type="common">RV-A</name>
    <dbReference type="NCBI Taxonomy" id="444186"/>
    <lineage>
        <taxon>Viruses</taxon>
        <taxon>Riboviria</taxon>
        <taxon>Orthornavirae</taxon>
        <taxon>Duplornaviricota</taxon>
        <taxon>Resentoviricetes</taxon>
        <taxon>Reovirales</taxon>
        <taxon>Sedoreoviridae</taxon>
        <taxon>Rotavirus</taxon>
        <taxon>Rotavirus A</taxon>
    </lineage>
</organism>
<proteinExistence type="inferred from homology"/>
<comment type="function">
    <molecule>Outer capsid protein VP4</molecule>
    <text evidence="1">Spike-forming protein that mediates virion attachment to the host epithelial cell receptors and plays a major role in cell penetration, determination of host range restriction and virulence. Rotavirus attachment and entry into the host cell probably involves multiple sequential contacts between the outer capsid proteins VP4 and VP7, and the cell receptors. It is subsequently lost, together with VP7, following virus entry into the host cell. Following entry into the host cell, low intracellular or intravesicular Ca(2+) concentration probably causes the calcium-stabilized VP7 trimers to dissociate from the virion. This step is probably necessary for the membrane-disrupting entry step and the release of VP4, which is locked onto the virion by VP7. During the virus exit from the host cell, VP4 seems to be required to target the newly formed virions to the host cell lipid rafts.</text>
</comment>
<comment type="function">
    <molecule>Outer capsid protein VP5*</molecule>
    <text evidence="1">Forms the spike 'foot' and 'body' and acts as a membrane permeabilization protein that mediates release of viral particles from endosomal compartments into the cytoplasm. During entry, the part of VP5* that protrudes from the virus folds back on itself and reorganizes from a local dimer to a trimer. This reorganization may be linked to membrane penetration by exposing VP5* hydrophobic region. In integrin-dependent strains, VP5* targets the integrin heterodimer ITGA2/ITGB1 for cell attachment.</text>
</comment>
<comment type="function">
    <molecule>Outer capsid protein VP8*</molecule>
    <text evidence="1">Forms the head of the spikes and mediates the recognition of specific host cell surface glycans. It is the viral hemagglutinin and an important target of neutralizing antibodies. In sialic acid-dependent strains, VP8* binds to host cell sialic acid, most probably a ganglioside, providing the initial contact. In some other strains, VP8* mediates the attachment to histo-blood group antigens (HBGAs) for viral entry.</text>
</comment>
<comment type="subunit">
    <molecule>Outer capsid protein VP4</molecule>
    <text evidence="1">Homotrimer. VP4 adopts a dimeric appearance above the capsid surface, while forming a trimeric base anchored inside the capsid layer. Only hints of the third molecule are observed above the capsid surface. It probably performs a series of molecular rearrangements during viral entry. Prior to trypsin cleavage, it is flexible. The priming trypsin cleavage triggers its rearrangement into rigid spikes with approximate two-fold symmetry of their protruding parts. After an unknown second triggering event, cleaved VP4 may undergo another rearrangement, in which two VP5* subunits fold back on themselves and join a third subunit to form a tightly associated trimer, shaped like a folded umbrella. Interacts with VP6. Interacts with VP7.</text>
</comment>
<comment type="subunit">
    <molecule>Outer capsid protein VP5*</molecule>
    <text evidence="1">Homotrimer. The trimer is coiled-coil stabilized by its C-terminus, however, its N-terminus, known as antigen domain or 'body', seems to be flexible allowing it to self-associate either as a dimer or a trimer.</text>
</comment>
<comment type="subcellular location">
    <molecule>Outer capsid protein VP4</molecule>
    <subcellularLocation>
        <location evidence="1">Virion</location>
    </subcellularLocation>
    <subcellularLocation>
        <location evidence="1">Host rough endoplasmic reticulum</location>
    </subcellularLocation>
    <subcellularLocation>
        <location evidence="1">Host cell membrane</location>
    </subcellularLocation>
    <subcellularLocation>
        <location evidence="1">Host cytoplasm</location>
        <location evidence="1">Host cytoskeleton</location>
    </subcellularLocation>
    <subcellularLocation>
        <location evidence="1">Host endoplasmic reticulum-Golgi intermediate compartment</location>
    </subcellularLocation>
    <text evidence="1">The outer layer contains 180 copies of VP4, grouped as 60 dimers. Immature double-layered particles assembled in the cytoplasm bud across the membrane of the endoplasmic reticulum, acquiring during this process a transient lipid membrane that is modified with the ER resident viral glycoproteins NSP4 and VP7; these enveloped particles also contain VP4. As the particles move towards the interior of the ER cisternae, the transient lipid membrane and the non-structural protein NSP4 are lost, while the virus surface proteins VP4 and VP7 rearrange to form the outermost virus protein layer, yielding mature infectious triple-layered particles. VP4 also seems to associate with lipid rafts of the host cell membrane probably for the exit of the virus from the infected cell by an alternate pathway.</text>
</comment>
<comment type="subcellular location">
    <molecule>Outer capsid protein VP8*</molecule>
    <subcellularLocation>
        <location evidence="1">Virion</location>
    </subcellularLocation>
    <text evidence="1">Outer capsid protein.</text>
</comment>
<comment type="subcellular location">
    <molecule>Outer capsid protein VP5*</molecule>
    <subcellularLocation>
        <location evidence="1">Virion</location>
    </subcellularLocation>
    <text evidence="1">Outer capsid protein.</text>
</comment>
<comment type="domain">
    <molecule>Outer capsid protein VP4</molecule>
    <text evidence="1">The VP4 spike is divided into a foot, a stalk and body, and a head.</text>
</comment>
<comment type="PTM">
    <molecule>Outer capsid protein VP4</molecule>
    <text evidence="1">Proteolytic cleavage by trypsin results in activation of VP4 functions and greatly increases infectivity. The penetration into the host cell is dependent on trypsin treatment of VP4. It produces two peptides, VP5* and VP8* that remain associated with the virion. Cleavage of VP4 by trypsin probably occurs in vivo in the lumen of the intestine prior to infection of enterocytes. Trypsin seems to be incorporated into the three-layered viral particles but remains inactive as long as the viral outer capsid is intact and would only be activated upon the solubilization of the latter.</text>
</comment>
<comment type="miscellaneous">
    <text evidence="1">In group A rotaviruses, VP4 defines the P serotype.</text>
</comment>
<comment type="miscellaneous">
    <text evidence="1">Some rotavirus strains are neuraminidase-sensitive and require sialic acid to attach to the cell surface. Some rotavirus strains are integrin-dependent. Some rotavirus strains depend on ganglioside for their entry into the host cell. Hsp70 also seems to be involved in the entry of some strains.</text>
</comment>
<comment type="miscellaneous">
    <text evidence="1">This strain probably uses sialic acid to attach to the host cell.</text>
</comment>
<comment type="similarity">
    <text evidence="1">Belongs to the rotavirus VP4 family.</text>
</comment>
<organismHost>
    <name type="scientific">Macaca mulatta</name>
    <name type="common">Rhesus macaque</name>
    <dbReference type="NCBI Taxonomy" id="9544"/>
</organismHost>
<feature type="chain" id="PRO_0000368119" description="Outer capsid protein VP4" evidence="1">
    <location>
        <begin position="1"/>
        <end position="776"/>
    </location>
</feature>
<feature type="chain" id="PRO_0000368120" description="Outer capsid protein VP8*" evidence="1">
    <location>
        <begin position="1"/>
        <end position="231"/>
    </location>
</feature>
<feature type="chain" id="PRO_0000368121" description="Outer capsid protein VP5*" evidence="1">
    <location>
        <begin position="248"/>
        <end position="776"/>
    </location>
</feature>
<feature type="region of interest" description="Spike head" evidence="1">
    <location>
        <begin position="65"/>
        <end position="224"/>
    </location>
</feature>
<feature type="region of interest" description="Spike body and stalk (antigen domain)" evidence="1">
    <location>
        <begin position="248"/>
        <end position="479"/>
    </location>
</feature>
<feature type="region of interest" description="Hydrophobic; possible role in virus entry into host cell" evidence="1">
    <location>
        <begin position="389"/>
        <end position="409"/>
    </location>
</feature>
<feature type="region of interest" description="Spike foot" evidence="1">
    <location>
        <begin position="510"/>
        <end position="776"/>
    </location>
</feature>
<feature type="coiled-coil region" evidence="1">
    <location>
        <begin position="484"/>
        <end position="511"/>
    </location>
</feature>
<feature type="short sequence motif" description="DGE motif; interaction with ITGA2/ITGB1 heterodimer" evidence="1">
    <location>
        <begin position="308"/>
        <end position="310"/>
    </location>
</feature>
<feature type="short sequence motif" description="YGL motif; interaction with ITGA4" evidence="1">
    <location>
        <begin position="448"/>
        <end position="450"/>
    </location>
</feature>
<feature type="short sequence motif" description="KID motif; interaction with HSPA8" evidence="1">
    <location>
        <begin position="644"/>
        <end position="646"/>
    </location>
</feature>
<feature type="site" description="Binding to sialic acid" evidence="1">
    <location>
        <position position="101"/>
    </location>
</feature>
<feature type="site" description="Binding to sialic acid" evidence="1">
    <location>
        <position position="190"/>
    </location>
</feature>
<feature type="site" description="Cleavage" evidence="1">
    <location>
        <begin position="231"/>
        <end position="232"/>
    </location>
</feature>
<feature type="site" description="Cleavage" evidence="1">
    <location>
        <begin position="241"/>
        <end position="242"/>
    </location>
</feature>
<feature type="site" description="Cleavage; associated with enhancement of infectivity" evidence="1">
    <location>
        <begin position="247"/>
        <end position="248"/>
    </location>
</feature>
<feature type="disulfide bond" evidence="1">
    <location>
        <begin position="203"/>
        <end position="216"/>
    </location>
</feature>
<feature type="disulfide bond" evidence="1">
    <location>
        <begin position="318"/>
        <end position="380"/>
    </location>
</feature>
<protein>
    <recommendedName>
        <fullName evidence="1">Outer capsid protein VP4</fullName>
    </recommendedName>
    <alternativeName>
        <fullName evidence="1">Hemagglutinin</fullName>
    </alternativeName>
    <component>
        <recommendedName>
            <fullName evidence="1">Outer capsid protein VP8*</fullName>
        </recommendedName>
    </component>
    <component>
        <recommendedName>
            <fullName evidence="1">Outer capsid protein VP5*</fullName>
        </recommendedName>
    </component>
</protein>
<keyword id="KW-0167">Capsid protein</keyword>
<keyword id="KW-0175">Coiled coil</keyword>
<keyword id="KW-1015">Disulfide bond</keyword>
<keyword id="KW-0348">Hemagglutinin</keyword>
<keyword id="KW-1032">Host cell membrane</keyword>
<keyword id="KW-1035">Host cytoplasm</keyword>
<keyword id="KW-1037">Host cytoskeleton</keyword>
<keyword id="KW-1038">Host endoplasmic reticulum</keyword>
<keyword id="KW-1043">Host membrane</keyword>
<keyword id="KW-0945">Host-virus interaction</keyword>
<keyword id="KW-0472">Membrane</keyword>
<keyword id="KW-1152">Outer capsid protein</keyword>
<keyword id="KW-1161">Viral attachment to host cell</keyword>
<keyword id="KW-1162">Viral penetration into host cytoplasm</keyword>
<keyword id="KW-1173">Viral penetration via permeabilization of host membrane</keyword>
<keyword id="KW-0946">Virion</keyword>
<keyword id="KW-1160">Virus entry into host cell</keyword>
<accession>Q6PLR4</accession>
<reference key="1">
    <citation type="journal article" date="2005" name="J. Virol.">
        <title>Development of a rotavirus-shedding model in rhesus macaques, using a homologous wild-type rotavirus of a new P genotype.</title>
        <authorList>
            <person name="McNeal M.M."/>
            <person name="Sestak K."/>
            <person name="Choi A.H."/>
            <person name="Basu M."/>
            <person name="Cole M.J."/>
            <person name="Aye P.P."/>
            <person name="Bohm R.P."/>
            <person name="Ward R.L."/>
        </authorList>
    </citation>
    <scope>NUCLEOTIDE SEQUENCE [GENOMIC RNA]</scope>
</reference>
<name>VP4_ROTTU</name>
<sequence length="776" mass="86231">MASLIYRQLLANSYAVDLSDEIDIIGSEKTQNVTINPGPFAQTGYAPVNWGPGETNDSTTIEPILDGPYPPTTFNPPTGYWMLLSPLEAGVVVEGTNNSDRWLATILIEPNVAAETRTYTLFGVQEQISISNTSSTKWKFVDLVKTSLTGTYSQYGPLLSDTKLYGAMKYSGRIYTYEGETPNAATGYYSTTNYDSVNMTAFCDFYIIPRSQESTCTNYINNGLPPIQNTRNVVPVSLASRAIISHRAQANEDIIVSQTSLWKEMQYNRDITIRFKFANAIVKSGGLGYKWSEISFKPANYQYTYVRDGEEVTAHTTCSVNGINDFSYNGGSLPTDFGISRYEVIKENSYVYVDYWDDSQAFRNMVYVRSLAADLNSVMCTGGSYNFALPVGQWPVMTGGAVSLHSAGVTLSTQFTDFVSLNSLRFRFRLSVEEPPFSIVRTRISGLYGLPAADPNNGNEYYEIAGRFSLISLVPSNDDYQTPIMNSVTVRQDLERQLGELREEFNALSQEIAMSQLVDLALLPLDMFSMFSGIKSTIDAAKSMATNVMKKFKKSSLASSVSTLTDSLSDAASSMTRNSSIRSVGSSISAWTDVSSQLTDASASTSTIATQTATISRRLRLKEIATQTEGMNFDDISAAVLKTKIDRSVQISPSTLPDIVTEASEKFIPNRAYRVINNDEVFEAGMDGRFFAYRVETFEEIPFDVQRFADLVTDSPVISAIIDFKTLKNLNDNYGITRDQAFNLLRSDPRVLREFINQDNPIIRNRIEQLILQCRL</sequence>
<dbReference type="EMBL" id="AY596189">
    <property type="protein sequence ID" value="AAT01504.1"/>
    <property type="molecule type" value="Genomic_RNA"/>
</dbReference>
<dbReference type="SMR" id="Q6PLR4"/>
<dbReference type="GO" id="GO:0044172">
    <property type="term" value="C:host cell endoplasmic reticulum-Golgi intermediate compartment"/>
    <property type="evidence" value="ECO:0007669"/>
    <property type="project" value="UniProtKB-SubCell"/>
</dbReference>
<dbReference type="GO" id="GO:0020002">
    <property type="term" value="C:host cell plasma membrane"/>
    <property type="evidence" value="ECO:0007669"/>
    <property type="project" value="UniProtKB-SubCell"/>
</dbReference>
<dbReference type="GO" id="GO:0044168">
    <property type="term" value="C:host cell rough endoplasmic reticulum"/>
    <property type="evidence" value="ECO:0007669"/>
    <property type="project" value="UniProtKB-SubCell"/>
</dbReference>
<dbReference type="GO" id="GO:0044163">
    <property type="term" value="C:host cytoskeleton"/>
    <property type="evidence" value="ECO:0007669"/>
    <property type="project" value="UniProtKB-SubCell"/>
</dbReference>
<dbReference type="GO" id="GO:0016020">
    <property type="term" value="C:membrane"/>
    <property type="evidence" value="ECO:0007669"/>
    <property type="project" value="UniProtKB-KW"/>
</dbReference>
<dbReference type="GO" id="GO:0039624">
    <property type="term" value="C:viral outer capsid"/>
    <property type="evidence" value="ECO:0007669"/>
    <property type="project" value="UniProtKB-UniRule"/>
</dbReference>
<dbReference type="GO" id="GO:0039665">
    <property type="term" value="P:permeabilization of host organelle membrane involved in viral entry into host cell"/>
    <property type="evidence" value="ECO:0007669"/>
    <property type="project" value="UniProtKB-UniRule"/>
</dbReference>
<dbReference type="GO" id="GO:0019062">
    <property type="term" value="P:virion attachment to host cell"/>
    <property type="evidence" value="ECO:0007669"/>
    <property type="project" value="UniProtKB-UniRule"/>
</dbReference>
<dbReference type="Gene3D" id="1.20.5.170">
    <property type="match status" value="1"/>
</dbReference>
<dbReference type="Gene3D" id="2.60.120.200">
    <property type="match status" value="1"/>
</dbReference>
<dbReference type="HAMAP" id="MF_04132">
    <property type="entry name" value="Rota_A_VP4"/>
    <property type="match status" value="1"/>
</dbReference>
<dbReference type="HAMAP" id="MF_04125">
    <property type="entry name" value="Rota_VP4"/>
    <property type="match status" value="1"/>
</dbReference>
<dbReference type="InterPro" id="IPR013320">
    <property type="entry name" value="ConA-like_dom_sf"/>
</dbReference>
<dbReference type="InterPro" id="IPR042546">
    <property type="entry name" value="Rota_A_VP4"/>
</dbReference>
<dbReference type="InterPro" id="IPR035330">
    <property type="entry name" value="Rota_VP4_MID"/>
</dbReference>
<dbReference type="InterPro" id="IPR038017">
    <property type="entry name" value="Rota_VP4_MID_sf"/>
</dbReference>
<dbReference type="InterPro" id="IPR000416">
    <property type="entry name" value="VP4_concanavalin-like"/>
</dbReference>
<dbReference type="InterPro" id="IPR035329">
    <property type="entry name" value="VP4_helical"/>
</dbReference>
<dbReference type="Pfam" id="PF17477">
    <property type="entry name" value="Rota_VP4_MID"/>
    <property type="match status" value="1"/>
</dbReference>
<dbReference type="Pfam" id="PF00426">
    <property type="entry name" value="VP4_haemagglut"/>
    <property type="match status" value="1"/>
</dbReference>
<dbReference type="Pfam" id="PF17478">
    <property type="entry name" value="VP4_helical"/>
    <property type="match status" value="1"/>
</dbReference>
<dbReference type="SUPFAM" id="SSF49899">
    <property type="entry name" value="Concanavalin A-like lectins/glucanases"/>
    <property type="match status" value="1"/>
</dbReference>
<dbReference type="SUPFAM" id="SSF111379">
    <property type="entry name" value="VP4 membrane interaction domain"/>
    <property type="match status" value="1"/>
</dbReference>
<evidence type="ECO:0000255" key="1">
    <source>
        <dbReference type="HAMAP-Rule" id="MF_04132"/>
    </source>
</evidence>